<dbReference type="EMBL" id="AM849034">
    <property type="protein sequence ID" value="CAQ00406.1"/>
    <property type="molecule type" value="Genomic_DNA"/>
</dbReference>
<dbReference type="RefSeq" id="WP_012039304.1">
    <property type="nucleotide sequence ID" value="NZ_MZMN01000003.1"/>
</dbReference>
<dbReference type="SMR" id="B0RB41"/>
<dbReference type="STRING" id="31964.CMS0285"/>
<dbReference type="GeneID" id="92984327"/>
<dbReference type="KEGG" id="cms:CMS0285"/>
<dbReference type="eggNOG" id="COG0089">
    <property type="taxonomic scope" value="Bacteria"/>
</dbReference>
<dbReference type="HOGENOM" id="CLU_037562_3_2_11"/>
<dbReference type="OrthoDB" id="9793353at2"/>
<dbReference type="Proteomes" id="UP000001318">
    <property type="component" value="Chromosome"/>
</dbReference>
<dbReference type="GO" id="GO:1990904">
    <property type="term" value="C:ribonucleoprotein complex"/>
    <property type="evidence" value="ECO:0007669"/>
    <property type="project" value="UniProtKB-KW"/>
</dbReference>
<dbReference type="GO" id="GO:0005840">
    <property type="term" value="C:ribosome"/>
    <property type="evidence" value="ECO:0007669"/>
    <property type="project" value="UniProtKB-KW"/>
</dbReference>
<dbReference type="GO" id="GO:0019843">
    <property type="term" value="F:rRNA binding"/>
    <property type="evidence" value="ECO:0007669"/>
    <property type="project" value="UniProtKB-UniRule"/>
</dbReference>
<dbReference type="GO" id="GO:0003735">
    <property type="term" value="F:structural constituent of ribosome"/>
    <property type="evidence" value="ECO:0007669"/>
    <property type="project" value="InterPro"/>
</dbReference>
<dbReference type="GO" id="GO:0006412">
    <property type="term" value="P:translation"/>
    <property type="evidence" value="ECO:0007669"/>
    <property type="project" value="UniProtKB-UniRule"/>
</dbReference>
<dbReference type="FunFam" id="3.30.70.330:FF:000001">
    <property type="entry name" value="50S ribosomal protein L23"/>
    <property type="match status" value="1"/>
</dbReference>
<dbReference type="Gene3D" id="3.30.70.330">
    <property type="match status" value="1"/>
</dbReference>
<dbReference type="HAMAP" id="MF_01369_B">
    <property type="entry name" value="Ribosomal_uL23_B"/>
    <property type="match status" value="1"/>
</dbReference>
<dbReference type="InterPro" id="IPR012677">
    <property type="entry name" value="Nucleotide-bd_a/b_plait_sf"/>
</dbReference>
<dbReference type="InterPro" id="IPR013025">
    <property type="entry name" value="Ribosomal_uL23-like"/>
</dbReference>
<dbReference type="InterPro" id="IPR012678">
    <property type="entry name" value="Ribosomal_uL23/eL15/eS24_sf"/>
</dbReference>
<dbReference type="NCBIfam" id="NF004363">
    <property type="entry name" value="PRK05738.2-4"/>
    <property type="match status" value="1"/>
</dbReference>
<dbReference type="NCBIfam" id="NF004364">
    <property type="entry name" value="PRK05738.2-5"/>
    <property type="match status" value="1"/>
</dbReference>
<dbReference type="PANTHER" id="PTHR11620">
    <property type="entry name" value="60S RIBOSOMAL PROTEIN L23A"/>
    <property type="match status" value="1"/>
</dbReference>
<dbReference type="Pfam" id="PF00276">
    <property type="entry name" value="Ribosomal_L23"/>
    <property type="match status" value="1"/>
</dbReference>
<dbReference type="SUPFAM" id="SSF54189">
    <property type="entry name" value="Ribosomal proteins S24e, L23 and L15e"/>
    <property type="match status" value="1"/>
</dbReference>
<comment type="function">
    <text evidence="1">One of the early assembly proteins it binds 23S rRNA. One of the proteins that surrounds the polypeptide exit tunnel on the outside of the ribosome. Forms the main docking site for trigger factor binding to the ribosome.</text>
</comment>
<comment type="subunit">
    <text evidence="1">Part of the 50S ribosomal subunit. Contacts protein L29, and trigger factor when it is bound to the ribosome.</text>
</comment>
<comment type="similarity">
    <text evidence="1">Belongs to the universal ribosomal protein uL23 family.</text>
</comment>
<evidence type="ECO:0000255" key="1">
    <source>
        <dbReference type="HAMAP-Rule" id="MF_01369"/>
    </source>
</evidence>
<evidence type="ECO:0000305" key="2"/>
<organism>
    <name type="scientific">Clavibacter sepedonicus</name>
    <name type="common">Clavibacter michiganensis subsp. sepedonicus</name>
    <dbReference type="NCBI Taxonomy" id="31964"/>
    <lineage>
        <taxon>Bacteria</taxon>
        <taxon>Bacillati</taxon>
        <taxon>Actinomycetota</taxon>
        <taxon>Actinomycetes</taxon>
        <taxon>Micrococcales</taxon>
        <taxon>Microbacteriaceae</taxon>
        <taxon>Clavibacter</taxon>
    </lineage>
</organism>
<accession>B0RB41</accession>
<sequence length="99" mass="10932">MSATQKDPRDIIIAPVVSEKSYGLIDQGKYTFIVDPRSNKTEIKLAIEKIFGVQVASVNTLNKQGKTRRTKFGMGKRKDTKRAIVSLKSGSIDIFTTVG</sequence>
<name>RL23_CLASE</name>
<proteinExistence type="inferred from homology"/>
<gene>
    <name evidence="1" type="primary">rplW</name>
    <name type="ordered locus">CMS0285</name>
</gene>
<feature type="chain" id="PRO_1000184076" description="Large ribosomal subunit protein uL23">
    <location>
        <begin position="1"/>
        <end position="99"/>
    </location>
</feature>
<protein>
    <recommendedName>
        <fullName evidence="1">Large ribosomal subunit protein uL23</fullName>
    </recommendedName>
    <alternativeName>
        <fullName evidence="2">50S ribosomal protein L23</fullName>
    </alternativeName>
</protein>
<reference key="1">
    <citation type="journal article" date="2008" name="J. Bacteriol.">
        <title>Genome of the actinomycete plant pathogen Clavibacter michiganensis subsp. sepedonicus suggests recent niche adaptation.</title>
        <authorList>
            <person name="Bentley S.D."/>
            <person name="Corton C."/>
            <person name="Brown S.E."/>
            <person name="Barron A."/>
            <person name="Clark L."/>
            <person name="Doggett J."/>
            <person name="Harris B."/>
            <person name="Ormond D."/>
            <person name="Quail M.A."/>
            <person name="May G."/>
            <person name="Francis D."/>
            <person name="Knudson D."/>
            <person name="Parkhill J."/>
            <person name="Ishimaru C.A."/>
        </authorList>
    </citation>
    <scope>NUCLEOTIDE SEQUENCE [LARGE SCALE GENOMIC DNA]</scope>
    <source>
        <strain>ATCC 33113 / DSM 20744 / JCM 9667 / LMG 2889 / ICMP 2535 / C-1</strain>
    </source>
</reference>
<keyword id="KW-0687">Ribonucleoprotein</keyword>
<keyword id="KW-0689">Ribosomal protein</keyword>
<keyword id="KW-0694">RNA-binding</keyword>
<keyword id="KW-0699">rRNA-binding</keyword>